<sequence length="151" mass="17764">MKKKKALPSLLYLVFIVLLPWGVSSSFNKCLELWIKNWWNTRQSETLLTDIQEKRILERFIELEELSLLDEMIKGKLKTHVQKPPTGIHKEIIQWVKINNEDHLHTILHFSTNIICLAILSGSFFLGKEELVILNSWVQEFFYNLNDSIKA</sequence>
<name>CEMA_AEGTA</name>
<gene>
    <name evidence="1" type="primary">cemA</name>
    <name type="synonym">ycf10</name>
</gene>
<protein>
    <recommendedName>
        <fullName evidence="1">Potassium/proton antiporter CemA</fullName>
    </recommendedName>
    <alternativeName>
        <fullName evidence="1">Chloroplast envelope membrane protein A</fullName>
        <shortName evidence="1">CemA</shortName>
    </alternativeName>
</protein>
<evidence type="ECO:0000255" key="1">
    <source>
        <dbReference type="HAMAP-Rule" id="MF_01308"/>
    </source>
</evidence>
<evidence type="ECO:0000305" key="2"/>
<dbReference type="EMBL" id="X62119">
    <property type="protein sequence ID" value="CAA44041.1"/>
    <property type="molecule type" value="Genomic_DNA"/>
</dbReference>
<dbReference type="PIR" id="S17322">
    <property type="entry name" value="S17322"/>
</dbReference>
<dbReference type="SMR" id="P69375"/>
<dbReference type="GO" id="GO:0009706">
    <property type="term" value="C:chloroplast inner membrane"/>
    <property type="evidence" value="ECO:0007669"/>
    <property type="project" value="UniProtKB-SubCell"/>
</dbReference>
<dbReference type="GO" id="GO:0015297">
    <property type="term" value="F:antiporter activity"/>
    <property type="evidence" value="ECO:0007669"/>
    <property type="project" value="UniProtKB-KW"/>
</dbReference>
<dbReference type="GO" id="GO:0006813">
    <property type="term" value="P:potassium ion transport"/>
    <property type="evidence" value="ECO:0007669"/>
    <property type="project" value="UniProtKB-KW"/>
</dbReference>
<dbReference type="GO" id="GO:1902600">
    <property type="term" value="P:proton transmembrane transport"/>
    <property type="evidence" value="ECO:0007669"/>
    <property type="project" value="UniProtKB-KW"/>
</dbReference>
<dbReference type="InterPro" id="IPR004282">
    <property type="entry name" value="CemA"/>
</dbReference>
<dbReference type="PANTHER" id="PTHR33650:SF2">
    <property type="entry name" value="CHLOROPLAST ENVELOPE MEMBRANE PROTEIN"/>
    <property type="match status" value="1"/>
</dbReference>
<dbReference type="PANTHER" id="PTHR33650">
    <property type="entry name" value="CHLOROPLAST ENVELOPE MEMBRANE PROTEIN-RELATED"/>
    <property type="match status" value="1"/>
</dbReference>
<dbReference type="Pfam" id="PF03040">
    <property type="entry name" value="CemA"/>
    <property type="match status" value="1"/>
</dbReference>
<reference key="1">
    <citation type="journal article" date="1991" name="Genetics">
        <title>Molecular analysis of the hot spot region related to length mutations in wheat chloroplast DNAs. I. Nucleotide divergence of genes and intergenic spacer regions located in the hot spot region.</title>
        <authorList>
            <person name="Ogihara Y."/>
            <person name="Terachi T."/>
            <person name="Sasakuma T."/>
        </authorList>
    </citation>
    <scope>NUCLEOTIDE SEQUENCE [GENOMIC DNA]</scope>
    <source>
        <strain>cv. Typica</strain>
        <tissue>Seedling</tissue>
    </source>
</reference>
<proteinExistence type="inferred from homology"/>
<geneLocation type="chloroplast"/>
<keyword id="KW-0050">Antiport</keyword>
<keyword id="KW-0150">Chloroplast</keyword>
<keyword id="KW-0375">Hydrogen ion transport</keyword>
<keyword id="KW-0406">Ion transport</keyword>
<keyword id="KW-0472">Membrane</keyword>
<keyword id="KW-0934">Plastid</keyword>
<keyword id="KW-1001">Plastid inner membrane</keyword>
<keyword id="KW-0630">Potassium</keyword>
<keyword id="KW-0633">Potassium transport</keyword>
<keyword id="KW-0812">Transmembrane</keyword>
<keyword id="KW-1133">Transmembrane helix</keyword>
<keyword id="KW-0813">Transport</keyword>
<accession>P69375</accession>
<accession>P25411</accession>
<organism>
    <name type="scientific">Aegilops tauschii</name>
    <name type="common">Tausch's goatgrass</name>
    <name type="synonym">Aegilops squarrosa</name>
    <dbReference type="NCBI Taxonomy" id="37682"/>
    <lineage>
        <taxon>Eukaryota</taxon>
        <taxon>Viridiplantae</taxon>
        <taxon>Streptophyta</taxon>
        <taxon>Embryophyta</taxon>
        <taxon>Tracheophyta</taxon>
        <taxon>Spermatophyta</taxon>
        <taxon>Magnoliopsida</taxon>
        <taxon>Liliopsida</taxon>
        <taxon>Poales</taxon>
        <taxon>Poaceae</taxon>
        <taxon>BOP clade</taxon>
        <taxon>Pooideae</taxon>
        <taxon>Triticodae</taxon>
        <taxon>Triticeae</taxon>
        <taxon>Triticinae</taxon>
        <taxon>Aegilops</taxon>
    </lineage>
</organism>
<feature type="chain" id="PRO_0000216630" description="Potassium/proton antiporter CemA">
    <location>
        <begin position="1"/>
        <end position="151" status="greater than"/>
    </location>
</feature>
<feature type="transmembrane region" description="Helical" evidence="1">
    <location>
        <begin position="7"/>
        <end position="27"/>
    </location>
</feature>
<feature type="transmembrane region" description="Helical" evidence="1">
    <location>
        <begin position="107"/>
        <end position="127"/>
    </location>
</feature>
<feature type="non-terminal residue">
    <location>
        <position position="151"/>
    </location>
</feature>
<comment type="function">
    <text evidence="1">Contributes to K(+)/H(+) antiport activity by supporting proton efflux to control proton extrusion and homeostasis in chloroplasts in a light-dependent manner to modulate photosynthesis. Prevents excessive induction of non-photochemical quenching (NPQ) under continuous-light conditions. Indirectly promotes efficient inorganic carbon uptake into chloroplasts.</text>
</comment>
<comment type="catalytic activity">
    <reaction evidence="1">
        <text>K(+)(in) + H(+)(out) = K(+)(out) + H(+)(in)</text>
        <dbReference type="Rhea" id="RHEA:29467"/>
        <dbReference type="ChEBI" id="CHEBI:15378"/>
        <dbReference type="ChEBI" id="CHEBI:29103"/>
    </reaction>
</comment>
<comment type="subcellular location">
    <subcellularLocation>
        <location evidence="1">Plastid</location>
        <location evidence="1">Chloroplast inner membrane</location>
        <topology evidence="1">Multi-pass membrane protein</topology>
    </subcellularLocation>
</comment>
<comment type="similarity">
    <text evidence="1 2">Belongs to the CemA family.</text>
</comment>